<sequence length="457" mass="52294">MKLSRIVRGANQWLSKTPERALDQAYRAALKIKELEDKHFQGKKVSPDTAQYGDSVMTYFEAELQGYLQTIKVRLGVFKTSRLFTSLSEPTHPRDERIALEQDSHGNRLLQKLKFIDDVISKYKTNEIVTAHSSDNGVIRGSELTPLNQQQVVIEANGKVPPPKKTNPQPAKKLTNLTVDEPKNKLDSATDKTGVLPRSFLNTINRIKQEIDPKSEETEEAVLKRFRTSRYKTAISIKFILLLIIVPLLTHQLTKTFFLTPVVEHYFSQHEQVVFINKDLEEEAFVELRSFEEALHFKSLIGIIPKLTQEEIEQEVRLKAEEISESYRLEGINAISNVFADIFSLIAFGVVIATSRKEIEIVKSFLDGILYSLSDSAKAFLIILFTDMFVGFHSPHGWEVILEGVARHFGLPENRDFNFLFIATFPVILDTVLKYWIFRYLNRISPSAVATYRNMNE</sequence>
<accession>B7KHV5</accession>
<reference key="1">
    <citation type="journal article" date="2011" name="MBio">
        <title>Novel metabolic attributes of the genus Cyanothece, comprising a group of unicellular nitrogen-fixing Cyanobacteria.</title>
        <authorList>
            <person name="Bandyopadhyay A."/>
            <person name="Elvitigala T."/>
            <person name="Welsh E."/>
            <person name="Stockel J."/>
            <person name="Liberton M."/>
            <person name="Min H."/>
            <person name="Sherman L.A."/>
            <person name="Pakrasi H.B."/>
        </authorList>
    </citation>
    <scope>NUCLEOTIDE SEQUENCE [LARGE SCALE GENOMIC DNA]</scope>
    <source>
        <strain>PCC 7424</strain>
    </source>
</reference>
<feature type="chain" id="PRO_1000140910" description="Proton extrusion protein PxcA">
    <location>
        <begin position="1"/>
        <end position="457"/>
    </location>
</feature>
<feature type="transmembrane region" description="Helical" evidence="1">
    <location>
        <begin position="239"/>
        <end position="259"/>
    </location>
</feature>
<feature type="transmembrane region" description="Helical" evidence="1">
    <location>
        <begin position="332"/>
        <end position="352"/>
    </location>
</feature>
<feature type="transmembrane region" description="Helical" evidence="1">
    <location>
        <begin position="368"/>
        <end position="390"/>
    </location>
</feature>
<feature type="transmembrane region" description="Helical" evidence="1">
    <location>
        <begin position="417"/>
        <end position="437"/>
    </location>
</feature>
<keyword id="KW-0997">Cell inner membrane</keyword>
<keyword id="KW-1003">Cell membrane</keyword>
<keyword id="KW-0375">Hydrogen ion transport</keyword>
<keyword id="KW-0406">Ion transport</keyword>
<keyword id="KW-0472">Membrane</keyword>
<keyword id="KW-1185">Reference proteome</keyword>
<keyword id="KW-0812">Transmembrane</keyword>
<keyword id="KW-1133">Transmembrane helix</keyword>
<keyword id="KW-0813">Transport</keyword>
<organism>
    <name type="scientific">Gloeothece citriformis (strain PCC 7424)</name>
    <name type="common">Cyanothece sp. (strain PCC 7424)</name>
    <dbReference type="NCBI Taxonomy" id="65393"/>
    <lineage>
        <taxon>Bacteria</taxon>
        <taxon>Bacillati</taxon>
        <taxon>Cyanobacteriota</taxon>
        <taxon>Cyanophyceae</taxon>
        <taxon>Oscillatoriophycideae</taxon>
        <taxon>Chroococcales</taxon>
        <taxon>Aphanothecaceae</taxon>
        <taxon>Gloeothece</taxon>
        <taxon>Gloeothece citriformis</taxon>
    </lineage>
</organism>
<gene>
    <name evidence="1" type="primary">pxcA</name>
    <name type="ordered locus">PCC7424_3669</name>
</gene>
<evidence type="ECO:0000255" key="1">
    <source>
        <dbReference type="HAMAP-Rule" id="MF_01308"/>
    </source>
</evidence>
<proteinExistence type="inferred from homology"/>
<name>PXCA_GLOC7</name>
<dbReference type="EMBL" id="CP001291">
    <property type="protein sequence ID" value="ACK72052.1"/>
    <property type="molecule type" value="Genomic_DNA"/>
</dbReference>
<dbReference type="RefSeq" id="WP_015955645.1">
    <property type="nucleotide sequence ID" value="NC_011729.1"/>
</dbReference>
<dbReference type="STRING" id="65393.PCC7424_3669"/>
<dbReference type="KEGG" id="cyc:PCC7424_3669"/>
<dbReference type="eggNOG" id="ENOG502Z8DN">
    <property type="taxonomic scope" value="Bacteria"/>
</dbReference>
<dbReference type="HOGENOM" id="CLU_690401_0_0_3"/>
<dbReference type="OrthoDB" id="418298at2"/>
<dbReference type="Proteomes" id="UP000002384">
    <property type="component" value="Chromosome"/>
</dbReference>
<dbReference type="GO" id="GO:0005886">
    <property type="term" value="C:plasma membrane"/>
    <property type="evidence" value="ECO:0007669"/>
    <property type="project" value="UniProtKB-SubCell"/>
</dbReference>
<dbReference type="GO" id="GO:0015078">
    <property type="term" value="F:proton transmembrane transporter activity"/>
    <property type="evidence" value="ECO:0007669"/>
    <property type="project" value="UniProtKB-UniRule"/>
</dbReference>
<dbReference type="HAMAP" id="MF_01308">
    <property type="entry name" value="CemA_PxcA"/>
    <property type="match status" value="1"/>
</dbReference>
<dbReference type="InterPro" id="IPR004282">
    <property type="entry name" value="CemA"/>
</dbReference>
<dbReference type="NCBIfam" id="NF002703">
    <property type="entry name" value="PRK02507.1-1"/>
    <property type="match status" value="1"/>
</dbReference>
<dbReference type="PANTHER" id="PTHR33650:SF2">
    <property type="entry name" value="CHLOROPLAST ENVELOPE MEMBRANE PROTEIN"/>
    <property type="match status" value="1"/>
</dbReference>
<dbReference type="PANTHER" id="PTHR33650">
    <property type="entry name" value="CHLOROPLAST ENVELOPE MEMBRANE PROTEIN-RELATED"/>
    <property type="match status" value="1"/>
</dbReference>
<dbReference type="Pfam" id="PF03040">
    <property type="entry name" value="CemA"/>
    <property type="match status" value="1"/>
</dbReference>
<protein>
    <recommendedName>
        <fullName evidence="1">Proton extrusion protein PxcA</fullName>
    </recommendedName>
</protein>
<comment type="function">
    <text evidence="1">Required for H(+) efflux immediately after light irradiation to form a rapid H(+) concentration gradient across the thylakoid membranes. Together with PxcL, contributes to transient H(+) uptake following dark to light transition.</text>
</comment>
<comment type="subcellular location">
    <subcellularLocation>
        <location evidence="1">Cell inner membrane</location>
        <topology evidence="1">Multi-pass membrane protein</topology>
    </subcellularLocation>
</comment>
<comment type="similarity">
    <text evidence="1">Belongs to the CemA family.</text>
</comment>